<keyword id="KW-0031">Aminopeptidase</keyword>
<keyword id="KW-0963">Cytoplasm</keyword>
<keyword id="KW-0378">Hydrolase</keyword>
<keyword id="KW-0464">Manganese</keyword>
<keyword id="KW-0479">Metal-binding</keyword>
<keyword id="KW-0645">Protease</keyword>
<protein>
    <recommendedName>
        <fullName evidence="1">Probable cytosol aminopeptidase</fullName>
        <ecNumber evidence="1">3.4.11.1</ecNumber>
    </recommendedName>
    <alternativeName>
        <fullName evidence="1">Leucine aminopeptidase</fullName>
        <shortName evidence="1">LAP</shortName>
        <ecNumber evidence="1">3.4.11.10</ecNumber>
    </alternativeName>
    <alternativeName>
        <fullName evidence="1">Leucyl aminopeptidase</fullName>
    </alternativeName>
</protein>
<comment type="function">
    <text evidence="1">Presumably involved in the processing and regular turnover of intracellular proteins. Catalyzes the removal of unsubstituted N-terminal amino acids from various peptides.</text>
</comment>
<comment type="catalytic activity">
    <reaction evidence="1">
        <text>Release of an N-terminal amino acid, Xaa-|-Yaa-, in which Xaa is preferably Leu, but may be other amino acids including Pro although not Arg or Lys, and Yaa may be Pro. Amino acid amides and methyl esters are also readily hydrolyzed, but rates on arylamides are exceedingly low.</text>
        <dbReference type="EC" id="3.4.11.1"/>
    </reaction>
</comment>
<comment type="catalytic activity">
    <reaction evidence="1">
        <text>Release of an N-terminal amino acid, preferentially leucine, but not glutamic or aspartic acids.</text>
        <dbReference type="EC" id="3.4.11.10"/>
    </reaction>
</comment>
<comment type="cofactor">
    <cofactor evidence="1">
        <name>Mn(2+)</name>
        <dbReference type="ChEBI" id="CHEBI:29035"/>
    </cofactor>
    <text evidence="1">Binds 2 manganese ions per subunit.</text>
</comment>
<comment type="subcellular location">
    <subcellularLocation>
        <location evidence="1">Cytoplasm</location>
    </subcellularLocation>
</comment>
<comment type="similarity">
    <text evidence="1">Belongs to the peptidase M17 family.</text>
</comment>
<feature type="chain" id="PRO_1000192724" description="Probable cytosol aminopeptidase">
    <location>
        <begin position="1"/>
        <end position="502"/>
    </location>
</feature>
<feature type="active site" evidence="1">
    <location>
        <position position="281"/>
    </location>
</feature>
<feature type="active site" evidence="1">
    <location>
        <position position="355"/>
    </location>
</feature>
<feature type="binding site" evidence="1">
    <location>
        <position position="269"/>
    </location>
    <ligand>
        <name>Mn(2+)</name>
        <dbReference type="ChEBI" id="CHEBI:29035"/>
        <label>2</label>
    </ligand>
</feature>
<feature type="binding site" evidence="1">
    <location>
        <position position="274"/>
    </location>
    <ligand>
        <name>Mn(2+)</name>
        <dbReference type="ChEBI" id="CHEBI:29035"/>
        <label>1</label>
    </ligand>
</feature>
<feature type="binding site" evidence="1">
    <location>
        <position position="274"/>
    </location>
    <ligand>
        <name>Mn(2+)</name>
        <dbReference type="ChEBI" id="CHEBI:29035"/>
        <label>2</label>
    </ligand>
</feature>
<feature type="binding site" evidence="1">
    <location>
        <position position="292"/>
    </location>
    <ligand>
        <name>Mn(2+)</name>
        <dbReference type="ChEBI" id="CHEBI:29035"/>
        <label>2</label>
    </ligand>
</feature>
<feature type="binding site" evidence="1">
    <location>
        <position position="351"/>
    </location>
    <ligand>
        <name>Mn(2+)</name>
        <dbReference type="ChEBI" id="CHEBI:29035"/>
        <label>1</label>
    </ligand>
</feature>
<feature type="binding site" evidence="1">
    <location>
        <position position="353"/>
    </location>
    <ligand>
        <name>Mn(2+)</name>
        <dbReference type="ChEBI" id="CHEBI:29035"/>
        <label>1</label>
    </ligand>
</feature>
<feature type="binding site" evidence="1">
    <location>
        <position position="353"/>
    </location>
    <ligand>
        <name>Mn(2+)</name>
        <dbReference type="ChEBI" id="CHEBI:29035"/>
        <label>2</label>
    </ligand>
</feature>
<evidence type="ECO:0000255" key="1">
    <source>
        <dbReference type="HAMAP-Rule" id="MF_00181"/>
    </source>
</evidence>
<reference key="1">
    <citation type="journal article" date="2008" name="PLoS ONE">
        <title>Environmental adaptation: genomic analysis of the piezotolerant and psychrotolerant deep-sea iron reducing bacterium Shewanella piezotolerans WP3.</title>
        <authorList>
            <person name="Wang F."/>
            <person name="Wang J."/>
            <person name="Jian H."/>
            <person name="Zhang B."/>
            <person name="Li S."/>
            <person name="Wang F."/>
            <person name="Zeng X."/>
            <person name="Gao L."/>
            <person name="Bartlett D.H."/>
            <person name="Yu J."/>
            <person name="Hu S."/>
            <person name="Xiao X."/>
        </authorList>
    </citation>
    <scope>NUCLEOTIDE SEQUENCE [LARGE SCALE GENOMIC DNA]</scope>
    <source>
        <strain>WP3 / JCM 13877</strain>
    </source>
</reference>
<gene>
    <name evidence="1" type="primary">pepA</name>
    <name type="ordered locus">swp_4219</name>
</gene>
<name>AMPA_SHEPW</name>
<sequence length="502" mass="54758">MEFSVKSGSPEKQRSACIVVGVYEPRRLSGIAEQLDKISEGYISNLLRRGDLEGKPGQMLLLHHVPNVLSERVLLVGCGKERELDERQYKQIITKTINTLNETGSMEAVCFLTELHVKGRDTYWKVREAVESTQNSLYSFDALKTRKGETRRPLRKLVFNVPTRRELTVGERAIEHGMAVSAGMHLCRDVANMPPNICNPAYLASQARQIAENTENLTVTTVGEEQMEKLGMNSYLAVGRGSDNESVMTIMEYKGAVDNTQKPIVLIGKGLTFDSGGISLKPGEGMDEMKYDMGGAAGVIGAMKALCDMQLPINVIGVLAGCENMPSSNAYRPGDILTTMSGQTVEVLNTDAEGRLVLCDVLTYVERFDPELVVDTATLTGACVIALGKHASGLFSGHNPLAHELLNAGEQSGDRAWRMPLWDEYQEHLESPFADMTNLGGRPAGSITAACFLSRFAKKYNWAHLDVAGTAWNSGANKGSTGRPVPLLTQFLINRAGVDQGE</sequence>
<dbReference type="EC" id="3.4.11.1" evidence="1"/>
<dbReference type="EC" id="3.4.11.10" evidence="1"/>
<dbReference type="EMBL" id="CP000472">
    <property type="protein sequence ID" value="ACJ30874.1"/>
    <property type="molecule type" value="Genomic_DNA"/>
</dbReference>
<dbReference type="RefSeq" id="WP_020914211.1">
    <property type="nucleotide sequence ID" value="NC_011566.1"/>
</dbReference>
<dbReference type="SMR" id="B8CU18"/>
<dbReference type="STRING" id="225849.swp_4219"/>
<dbReference type="MEROPS" id="M17.003"/>
<dbReference type="KEGG" id="swp:swp_4219"/>
<dbReference type="eggNOG" id="COG0260">
    <property type="taxonomic scope" value="Bacteria"/>
</dbReference>
<dbReference type="HOGENOM" id="CLU_013734_2_2_6"/>
<dbReference type="OrthoDB" id="9809354at2"/>
<dbReference type="Proteomes" id="UP000000753">
    <property type="component" value="Chromosome"/>
</dbReference>
<dbReference type="GO" id="GO:0005737">
    <property type="term" value="C:cytoplasm"/>
    <property type="evidence" value="ECO:0007669"/>
    <property type="project" value="UniProtKB-SubCell"/>
</dbReference>
<dbReference type="GO" id="GO:0030145">
    <property type="term" value="F:manganese ion binding"/>
    <property type="evidence" value="ECO:0007669"/>
    <property type="project" value="UniProtKB-UniRule"/>
</dbReference>
<dbReference type="GO" id="GO:0070006">
    <property type="term" value="F:metalloaminopeptidase activity"/>
    <property type="evidence" value="ECO:0007669"/>
    <property type="project" value="InterPro"/>
</dbReference>
<dbReference type="GO" id="GO:0006508">
    <property type="term" value="P:proteolysis"/>
    <property type="evidence" value="ECO:0007669"/>
    <property type="project" value="UniProtKB-KW"/>
</dbReference>
<dbReference type="CDD" id="cd00433">
    <property type="entry name" value="Peptidase_M17"/>
    <property type="match status" value="1"/>
</dbReference>
<dbReference type="FunFam" id="3.40.220.10:FF:000001">
    <property type="entry name" value="Probable cytosol aminopeptidase"/>
    <property type="match status" value="1"/>
</dbReference>
<dbReference type="FunFam" id="3.40.630.10:FF:000004">
    <property type="entry name" value="Probable cytosol aminopeptidase"/>
    <property type="match status" value="1"/>
</dbReference>
<dbReference type="Gene3D" id="3.40.220.10">
    <property type="entry name" value="Leucine Aminopeptidase, subunit E, domain 1"/>
    <property type="match status" value="1"/>
</dbReference>
<dbReference type="Gene3D" id="3.40.630.10">
    <property type="entry name" value="Zn peptidases"/>
    <property type="match status" value="1"/>
</dbReference>
<dbReference type="HAMAP" id="MF_00181">
    <property type="entry name" value="Cytosol_peptidase_M17"/>
    <property type="match status" value="1"/>
</dbReference>
<dbReference type="InterPro" id="IPR011356">
    <property type="entry name" value="Leucine_aapep/pepB"/>
</dbReference>
<dbReference type="InterPro" id="IPR043472">
    <property type="entry name" value="Macro_dom-like"/>
</dbReference>
<dbReference type="InterPro" id="IPR000819">
    <property type="entry name" value="Peptidase_M17_C"/>
</dbReference>
<dbReference type="InterPro" id="IPR023042">
    <property type="entry name" value="Peptidase_M17_leu_NH2_pept"/>
</dbReference>
<dbReference type="InterPro" id="IPR008283">
    <property type="entry name" value="Peptidase_M17_N"/>
</dbReference>
<dbReference type="NCBIfam" id="NF002072">
    <property type="entry name" value="PRK00913.1-1"/>
    <property type="match status" value="1"/>
</dbReference>
<dbReference type="NCBIfam" id="NF002074">
    <property type="entry name" value="PRK00913.1-4"/>
    <property type="match status" value="1"/>
</dbReference>
<dbReference type="PANTHER" id="PTHR11963:SF23">
    <property type="entry name" value="CYTOSOL AMINOPEPTIDASE"/>
    <property type="match status" value="1"/>
</dbReference>
<dbReference type="PANTHER" id="PTHR11963">
    <property type="entry name" value="LEUCINE AMINOPEPTIDASE-RELATED"/>
    <property type="match status" value="1"/>
</dbReference>
<dbReference type="Pfam" id="PF00883">
    <property type="entry name" value="Peptidase_M17"/>
    <property type="match status" value="1"/>
</dbReference>
<dbReference type="Pfam" id="PF02789">
    <property type="entry name" value="Peptidase_M17_N"/>
    <property type="match status" value="1"/>
</dbReference>
<dbReference type="PRINTS" id="PR00481">
    <property type="entry name" value="LAMNOPPTDASE"/>
</dbReference>
<dbReference type="SUPFAM" id="SSF52949">
    <property type="entry name" value="Macro domain-like"/>
    <property type="match status" value="1"/>
</dbReference>
<dbReference type="SUPFAM" id="SSF53187">
    <property type="entry name" value="Zn-dependent exopeptidases"/>
    <property type="match status" value="1"/>
</dbReference>
<dbReference type="PROSITE" id="PS00631">
    <property type="entry name" value="CYTOSOL_AP"/>
    <property type="match status" value="1"/>
</dbReference>
<organism>
    <name type="scientific">Shewanella piezotolerans (strain WP3 / JCM 13877)</name>
    <dbReference type="NCBI Taxonomy" id="225849"/>
    <lineage>
        <taxon>Bacteria</taxon>
        <taxon>Pseudomonadati</taxon>
        <taxon>Pseudomonadota</taxon>
        <taxon>Gammaproteobacteria</taxon>
        <taxon>Alteromonadales</taxon>
        <taxon>Shewanellaceae</taxon>
        <taxon>Shewanella</taxon>
    </lineage>
</organism>
<accession>B8CU18</accession>
<proteinExistence type="inferred from homology"/>